<organism>
    <name type="scientific">Actinobacillus pleuropneumoniae serotype 7 (strain AP76)</name>
    <dbReference type="NCBI Taxonomy" id="537457"/>
    <lineage>
        <taxon>Bacteria</taxon>
        <taxon>Pseudomonadati</taxon>
        <taxon>Pseudomonadota</taxon>
        <taxon>Gammaproteobacteria</taxon>
        <taxon>Pasteurellales</taxon>
        <taxon>Pasteurellaceae</taxon>
        <taxon>Actinobacillus</taxon>
    </lineage>
</organism>
<dbReference type="EC" id="7.2.1.1" evidence="1"/>
<dbReference type="EMBL" id="CP001091">
    <property type="protein sequence ID" value="ACE60804.1"/>
    <property type="molecule type" value="Genomic_DNA"/>
</dbReference>
<dbReference type="RefSeq" id="WP_005595863.1">
    <property type="nucleotide sequence ID" value="NC_010939.1"/>
</dbReference>
<dbReference type="SMR" id="B3GZZ2"/>
<dbReference type="GeneID" id="48598297"/>
<dbReference type="KEGG" id="apa:APP7_0152"/>
<dbReference type="HOGENOM" id="CLU_046656_0_0_6"/>
<dbReference type="Proteomes" id="UP000001226">
    <property type="component" value="Chromosome"/>
</dbReference>
<dbReference type="GO" id="GO:0016655">
    <property type="term" value="F:oxidoreductase activity, acting on NAD(P)H, quinone or similar compound as acceptor"/>
    <property type="evidence" value="ECO:0007669"/>
    <property type="project" value="UniProtKB-UniRule"/>
</dbReference>
<dbReference type="GO" id="GO:0006814">
    <property type="term" value="P:sodium ion transport"/>
    <property type="evidence" value="ECO:0007669"/>
    <property type="project" value="UniProtKB-UniRule"/>
</dbReference>
<dbReference type="Gene3D" id="2.40.50.100">
    <property type="match status" value="1"/>
</dbReference>
<dbReference type="HAMAP" id="MF_00425">
    <property type="entry name" value="NqrA"/>
    <property type="match status" value="1"/>
</dbReference>
<dbReference type="InterPro" id="IPR008703">
    <property type="entry name" value="NqrA"/>
</dbReference>
<dbReference type="InterPro" id="IPR056148">
    <property type="entry name" value="NQRA_2nd"/>
</dbReference>
<dbReference type="InterPro" id="IPR022615">
    <property type="entry name" value="NqrA_C_domain"/>
</dbReference>
<dbReference type="InterPro" id="IPR056147">
    <property type="entry name" value="NQRA_N"/>
</dbReference>
<dbReference type="NCBIfam" id="TIGR01936">
    <property type="entry name" value="nqrA"/>
    <property type="match status" value="1"/>
</dbReference>
<dbReference type="NCBIfam" id="NF003759">
    <property type="entry name" value="PRK05352.1-2"/>
    <property type="match status" value="1"/>
</dbReference>
<dbReference type="PANTHER" id="PTHR37839">
    <property type="entry name" value="NA(+)-TRANSLOCATING NADH-QUINONE REDUCTASE SUBUNIT A"/>
    <property type="match status" value="1"/>
</dbReference>
<dbReference type="PANTHER" id="PTHR37839:SF1">
    <property type="entry name" value="NA(+)-TRANSLOCATING NADH-QUINONE REDUCTASE SUBUNIT A"/>
    <property type="match status" value="1"/>
</dbReference>
<dbReference type="Pfam" id="PF24836">
    <property type="entry name" value="NQRA_2nd"/>
    <property type="match status" value="1"/>
</dbReference>
<dbReference type="Pfam" id="PF05896">
    <property type="entry name" value="NQRA_N"/>
    <property type="match status" value="1"/>
</dbReference>
<dbReference type="Pfam" id="PF11973">
    <property type="entry name" value="NQRA_SLBB"/>
    <property type="match status" value="1"/>
</dbReference>
<sequence length="449" mass="48604">MITIKKGLDLPIAGTPAQVIHNGNTVNEVAMLGEEYVGMRPSMKVREGDVVKKGQVLFEDKKNPGVVFTAPASGTVVTINRGEKRVLQSVVIKVEGDEQITFTRYEAAQLASLSAEQVKQNLIESGLWTAFRTRPFSKVPALDAIPSSIFVNAMDTNPLAADPEVVLKEYETDFKDGLTVLTRLFNGQKPVYLCKDADSNIPLSPAIEGITIKSFSGVHPAGLVGTHIHFVDPVGATKQVWHLNYQDVIAIGKLFTTGELFTDRIISLAGPQVKNPRLVRTRLGANLSQLTANELNAGENRVISGSVLSGATAAGPVDYLGRYALQVSVLAEGREKELFGWIMPGSDKFSITRTVLGHFGKKLFNFTTAVHGGERAMVPIGAYERVMPLDIIPTLLLRDLAAGDTDSAQNLGCLELDEEDLALCTYVCPGKNNYGPMLRAALEKIEKEG</sequence>
<keyword id="KW-0406">Ion transport</keyword>
<keyword id="KW-0520">NAD</keyword>
<keyword id="KW-0915">Sodium</keyword>
<keyword id="KW-0739">Sodium transport</keyword>
<keyword id="KW-1278">Translocase</keyword>
<keyword id="KW-0813">Transport</keyword>
<keyword id="KW-0830">Ubiquinone</keyword>
<proteinExistence type="inferred from homology"/>
<feature type="chain" id="PRO_1000124165" description="Na(+)-translocating NADH-quinone reductase subunit A">
    <location>
        <begin position="1"/>
        <end position="449"/>
    </location>
</feature>
<accession>B3GZZ2</accession>
<protein>
    <recommendedName>
        <fullName evidence="1">Na(+)-translocating NADH-quinone reductase subunit A</fullName>
        <shortName evidence="1">Na(+)-NQR subunit A</shortName>
        <shortName evidence="1">Na(+)-translocating NQR subunit A</shortName>
        <ecNumber evidence="1">7.2.1.1</ecNumber>
    </recommendedName>
    <alternativeName>
        <fullName evidence="1">NQR complex subunit A</fullName>
    </alternativeName>
    <alternativeName>
        <fullName evidence="1">NQR-1 subunit A</fullName>
    </alternativeName>
</protein>
<reference key="1">
    <citation type="submission" date="2008-06" db="EMBL/GenBank/DDBJ databases">
        <title>Genome and proteome analysis of A. pleuropneumoniae serotype 7.</title>
        <authorList>
            <person name="Linke B."/>
            <person name="Buettner F."/>
            <person name="Martinez-Arias R."/>
            <person name="Goesmann A."/>
            <person name="Baltes N."/>
            <person name="Tegetmeyer H."/>
            <person name="Singh M."/>
            <person name="Gerlach G.F."/>
        </authorList>
    </citation>
    <scope>NUCLEOTIDE SEQUENCE [LARGE SCALE GENOMIC DNA]</scope>
    <source>
        <strain>AP76</strain>
    </source>
</reference>
<evidence type="ECO:0000255" key="1">
    <source>
        <dbReference type="HAMAP-Rule" id="MF_00425"/>
    </source>
</evidence>
<gene>
    <name evidence="1" type="primary">nqrA</name>
    <name type="ordered locus">APP7_0152</name>
</gene>
<name>NQRA_ACTP7</name>
<comment type="function">
    <text evidence="1">NQR complex catalyzes the reduction of ubiquinone-1 to ubiquinol by two successive reactions, coupled with the transport of Na(+) ions from the cytoplasm to the periplasm. NqrA to NqrE are probably involved in the second step, the conversion of ubisemiquinone to ubiquinol.</text>
</comment>
<comment type="catalytic activity">
    <reaction evidence="1">
        <text>a ubiquinone + n Na(+)(in) + NADH + H(+) = a ubiquinol + n Na(+)(out) + NAD(+)</text>
        <dbReference type="Rhea" id="RHEA:47748"/>
        <dbReference type="Rhea" id="RHEA-COMP:9565"/>
        <dbReference type="Rhea" id="RHEA-COMP:9566"/>
        <dbReference type="ChEBI" id="CHEBI:15378"/>
        <dbReference type="ChEBI" id="CHEBI:16389"/>
        <dbReference type="ChEBI" id="CHEBI:17976"/>
        <dbReference type="ChEBI" id="CHEBI:29101"/>
        <dbReference type="ChEBI" id="CHEBI:57540"/>
        <dbReference type="ChEBI" id="CHEBI:57945"/>
        <dbReference type="EC" id="7.2.1.1"/>
    </reaction>
</comment>
<comment type="subunit">
    <text evidence="1">Composed of six subunits; NqrA, NqrB, NqrC, NqrD, NqrE and NqrF.</text>
</comment>
<comment type="similarity">
    <text evidence="1">Belongs to the NqrA family.</text>
</comment>